<keyword id="KW-0106">Calcium</keyword>
<keyword id="KW-0479">Metal-binding</keyword>
<keyword id="KW-0677">Repeat</keyword>
<sequence length="208" mass="23688">MQARGTVKVQGDAKVDGKMSTGQHSHHQHLNSTQANATTTALEYRAMNRPLYRGPISHNIISEMAEGFYVLSGGYKKLFIPSKDVYALMQNVGMHLTEEEFHDALRVIGQSEPQNADELSFSDFLLLMTREVDDTMADELRSAFFHYDKYKTGYVTRKQFTELFATLGERSTPEELEELLAVAEVDETDDKIDYNRFVNELTSRVNCM</sequence>
<dbReference type="EMBL" id="L01583">
    <property type="protein sequence ID" value="AAA30171.1"/>
    <property type="molecule type" value="Genomic_DNA"/>
</dbReference>
<dbReference type="PIR" id="A48567">
    <property type="entry name" value="A48567"/>
</dbReference>
<dbReference type="RefSeq" id="XP_808088.1">
    <property type="nucleotide sequence ID" value="XM_802995.1"/>
</dbReference>
<dbReference type="SMR" id="P41048"/>
<dbReference type="GeneID" id="3538428"/>
<dbReference type="KEGG" id="tcr:507483.20"/>
<dbReference type="VEuPathDB" id="TriTrypDB:BCY84_04471"/>
<dbReference type="VEuPathDB" id="TriTrypDB:C3747_46g17"/>
<dbReference type="VEuPathDB" id="TriTrypDB:C4B63_138g28"/>
<dbReference type="VEuPathDB" id="TriTrypDB:ECC02_012808"/>
<dbReference type="VEuPathDB" id="TriTrypDB:TcBrA4_0110100"/>
<dbReference type="VEuPathDB" id="TriTrypDB:TcCL_ESM07168"/>
<dbReference type="VEuPathDB" id="TriTrypDB:TcCLB.506391.30"/>
<dbReference type="VEuPathDB" id="TriTrypDB:TcCLB.507483.20"/>
<dbReference type="VEuPathDB" id="TriTrypDB:TcG_06156"/>
<dbReference type="VEuPathDB" id="TriTrypDB:TCSYLVIO_006560"/>
<dbReference type="VEuPathDB" id="TriTrypDB:TcYC6_0037190"/>
<dbReference type="OrthoDB" id="26525at2759"/>
<dbReference type="GO" id="GO:0016460">
    <property type="term" value="C:myosin II complex"/>
    <property type="evidence" value="ECO:0007669"/>
    <property type="project" value="TreeGrafter"/>
</dbReference>
<dbReference type="GO" id="GO:0005509">
    <property type="term" value="F:calcium ion binding"/>
    <property type="evidence" value="ECO:0007669"/>
    <property type="project" value="InterPro"/>
</dbReference>
<dbReference type="CDD" id="cd00051">
    <property type="entry name" value="EFh"/>
    <property type="match status" value="1"/>
</dbReference>
<dbReference type="FunFam" id="1.10.238.10:FF:000001">
    <property type="entry name" value="Calmodulin 1"/>
    <property type="match status" value="1"/>
</dbReference>
<dbReference type="Gene3D" id="1.10.238.10">
    <property type="entry name" value="EF-hand"/>
    <property type="match status" value="1"/>
</dbReference>
<dbReference type="InterPro" id="IPR050230">
    <property type="entry name" value="CALM/Myosin/TropC-like"/>
</dbReference>
<dbReference type="InterPro" id="IPR011992">
    <property type="entry name" value="EF-hand-dom_pair"/>
</dbReference>
<dbReference type="InterPro" id="IPR002048">
    <property type="entry name" value="EF_hand_dom"/>
</dbReference>
<dbReference type="PANTHER" id="PTHR23048:SF0">
    <property type="entry name" value="CALMODULIN LIKE 3"/>
    <property type="match status" value="1"/>
</dbReference>
<dbReference type="PANTHER" id="PTHR23048">
    <property type="entry name" value="MYOSIN LIGHT CHAIN 1, 3"/>
    <property type="match status" value="1"/>
</dbReference>
<dbReference type="SUPFAM" id="SSF47473">
    <property type="entry name" value="EF-hand"/>
    <property type="match status" value="1"/>
</dbReference>
<dbReference type="PROSITE" id="PS50222">
    <property type="entry name" value="EF_HAND_2"/>
    <property type="match status" value="2"/>
</dbReference>
<feature type="chain" id="PRO_0000073836" description="EF-hand protein 5 variant 1">
    <location>
        <begin position="1"/>
        <end position="208"/>
    </location>
</feature>
<feature type="domain" description="EF-hand 1" evidence="3">
    <location>
        <begin position="64"/>
        <end position="98"/>
    </location>
</feature>
<feature type="domain" description="EF-hand 2" evidence="3">
    <location>
        <begin position="99"/>
        <end position="134"/>
    </location>
</feature>
<feature type="domain" description="EF-hand 3" evidence="1">
    <location>
        <begin position="135"/>
        <end position="170"/>
    </location>
</feature>
<feature type="domain" description="EF-hand 4" evidence="3">
    <location>
        <begin position="171"/>
        <end position="206"/>
    </location>
</feature>
<feature type="region of interest" description="Disordered" evidence="2">
    <location>
        <begin position="1"/>
        <end position="34"/>
    </location>
</feature>
<feature type="binding site" evidence="3">
    <location>
        <position position="118"/>
    </location>
    <ligand>
        <name>Ca(2+)</name>
        <dbReference type="ChEBI" id="CHEBI:29108"/>
        <label>1</label>
    </ligand>
</feature>
<feature type="binding site" evidence="3">
    <location>
        <position position="123"/>
    </location>
    <ligand>
        <name>Ca(2+)</name>
        <dbReference type="ChEBI" id="CHEBI:29108"/>
        <label>1</label>
    </ligand>
</feature>
<feature type="binding site" evidence="3">
    <location>
        <position position="148"/>
    </location>
    <ligand>
        <name>Ca(2+)</name>
        <dbReference type="ChEBI" id="CHEBI:29108"/>
        <label>2</label>
    </ligand>
</feature>
<feature type="binding site" evidence="3">
    <location>
        <position position="152"/>
    </location>
    <ligand>
        <name>Ca(2+)</name>
        <dbReference type="ChEBI" id="CHEBI:29108"/>
        <label>2</label>
    </ligand>
</feature>
<feature type="binding site" evidence="3">
    <location>
        <position position="154"/>
    </location>
    <ligand>
        <name>Ca(2+)</name>
        <dbReference type="ChEBI" id="CHEBI:29108"/>
        <label>2</label>
    </ligand>
</feature>
<protein>
    <recommendedName>
        <fullName>EF-hand protein 5 variant 1</fullName>
        <shortName>EFH5</shortName>
    </recommendedName>
    <alternativeName>
        <fullName>Calmodulin-ubiquitin-associated protein CUB2.65</fullName>
    </alternativeName>
</protein>
<reference key="1">
    <citation type="journal article" date="1993" name="Mol. Biochem. Parasitol.">
        <title>The calmodulin-ubiquitin associated genes of Trypanosoma cruzi: their identification and transcription.</title>
        <authorList>
            <person name="Ajioka J."/>
            <person name="Swindle J.T."/>
        </authorList>
    </citation>
    <scope>NUCLEOTIDE SEQUENCE [GENOMIC DNA]</scope>
</reference>
<proteinExistence type="predicted"/>
<evidence type="ECO:0000255" key="1">
    <source>
        <dbReference type="PROSITE-ProRule" id="PRU00448"/>
    </source>
</evidence>
<evidence type="ECO:0000256" key="2">
    <source>
        <dbReference type="SAM" id="MobiDB-lite"/>
    </source>
</evidence>
<evidence type="ECO:0000305" key="3"/>
<organism>
    <name type="scientific">Trypanosoma cruzi</name>
    <dbReference type="NCBI Taxonomy" id="5693"/>
    <lineage>
        <taxon>Eukaryota</taxon>
        <taxon>Discoba</taxon>
        <taxon>Euglenozoa</taxon>
        <taxon>Kinetoplastea</taxon>
        <taxon>Metakinetoplastina</taxon>
        <taxon>Trypanosomatida</taxon>
        <taxon>Trypanosomatidae</taxon>
        <taxon>Trypanosoma</taxon>
        <taxon>Schizotrypanum</taxon>
    </lineage>
</organism>
<comment type="domain">
    <text>This protein has four EF-hand domains, two of which may be functional calcium-binding sites.</text>
</comment>
<name>EFH51_TRYCR</name>
<accession>P41048</accession>